<accession>A2YM35</accession>
<sequence>MSSSSSTSPRFGSMISAKLASPPPSLLLPPSPRLQGRRLTPPSCTPGTPAALPSPGPDKEPEREAAGSGSGSATTPRSPAQLGSSQLHRWSRARAHRSGRRLEWPTIRDRGSGGASSPPTPTRPHPSSDEAASAAAKVAVEEEDGYGVVGRDEAAKSIYMVSDGTGWTAEHSVNAALGQFEHCLVDRGCAVNTHLFNGIDDMDRLIEIVKQAAKEGALVLYTLADPSMAEATKKACELWGVPSNDILRPTIEAIASHIGVAPSGIPRSSPSRKGQLTEDYFRRIEAIDFTIKQDDGAQPQNLNRAHIVLVGVSRTGKTPLSIYLAQKGYKVANVPIVMGVNLPKSLFEIDQDKIFGLTINPVVLQAIRKARAKTLGFHGQKSNYAEMEHVRGELDHANQIFAQHPIWPVIEVTGKAIEETAAVVVRIFHDRKQKCAMPRISKRVAPIRIYDYLSEMVNTHVEYQKIFARDF</sequence>
<reference key="1">
    <citation type="journal article" date="2005" name="PLoS Biol.">
        <title>The genomes of Oryza sativa: a history of duplications.</title>
        <authorList>
            <person name="Yu J."/>
            <person name="Wang J."/>
            <person name="Lin W."/>
            <person name="Li S."/>
            <person name="Li H."/>
            <person name="Zhou J."/>
            <person name="Ni P."/>
            <person name="Dong W."/>
            <person name="Hu S."/>
            <person name="Zeng C."/>
            <person name="Zhang J."/>
            <person name="Zhang Y."/>
            <person name="Li R."/>
            <person name="Xu Z."/>
            <person name="Li S."/>
            <person name="Li X."/>
            <person name="Zheng H."/>
            <person name="Cong L."/>
            <person name="Lin L."/>
            <person name="Yin J."/>
            <person name="Geng J."/>
            <person name="Li G."/>
            <person name="Shi J."/>
            <person name="Liu J."/>
            <person name="Lv H."/>
            <person name="Li J."/>
            <person name="Wang J."/>
            <person name="Deng Y."/>
            <person name="Ran L."/>
            <person name="Shi X."/>
            <person name="Wang X."/>
            <person name="Wu Q."/>
            <person name="Li C."/>
            <person name="Ren X."/>
            <person name="Wang J."/>
            <person name="Wang X."/>
            <person name="Li D."/>
            <person name="Liu D."/>
            <person name="Zhang X."/>
            <person name="Ji Z."/>
            <person name="Zhao W."/>
            <person name="Sun Y."/>
            <person name="Zhang Z."/>
            <person name="Bao J."/>
            <person name="Han Y."/>
            <person name="Dong L."/>
            <person name="Ji J."/>
            <person name="Chen P."/>
            <person name="Wu S."/>
            <person name="Liu J."/>
            <person name="Xiao Y."/>
            <person name="Bu D."/>
            <person name="Tan J."/>
            <person name="Yang L."/>
            <person name="Ye C."/>
            <person name="Zhang J."/>
            <person name="Xu J."/>
            <person name="Zhou Y."/>
            <person name="Yu Y."/>
            <person name="Zhang B."/>
            <person name="Zhuang S."/>
            <person name="Wei H."/>
            <person name="Liu B."/>
            <person name="Lei M."/>
            <person name="Yu H."/>
            <person name="Li Y."/>
            <person name="Xu H."/>
            <person name="Wei S."/>
            <person name="He X."/>
            <person name="Fang L."/>
            <person name="Zhang Z."/>
            <person name="Zhang Y."/>
            <person name="Huang X."/>
            <person name="Su Z."/>
            <person name="Tong W."/>
            <person name="Li J."/>
            <person name="Tong Z."/>
            <person name="Li S."/>
            <person name="Ye J."/>
            <person name="Wang L."/>
            <person name="Fang L."/>
            <person name="Lei T."/>
            <person name="Chen C.-S."/>
            <person name="Chen H.-C."/>
            <person name="Xu Z."/>
            <person name="Li H."/>
            <person name="Huang H."/>
            <person name="Zhang F."/>
            <person name="Xu H."/>
            <person name="Li N."/>
            <person name="Zhao C."/>
            <person name="Li S."/>
            <person name="Dong L."/>
            <person name="Huang Y."/>
            <person name="Li L."/>
            <person name="Xi Y."/>
            <person name="Qi Q."/>
            <person name="Li W."/>
            <person name="Zhang B."/>
            <person name="Hu W."/>
            <person name="Zhang Y."/>
            <person name="Tian X."/>
            <person name="Jiao Y."/>
            <person name="Liang X."/>
            <person name="Jin J."/>
            <person name="Gao L."/>
            <person name="Zheng W."/>
            <person name="Hao B."/>
            <person name="Liu S.-M."/>
            <person name="Wang W."/>
            <person name="Yuan L."/>
            <person name="Cao M."/>
            <person name="McDermott J."/>
            <person name="Samudrala R."/>
            <person name="Wang J."/>
            <person name="Wong G.K.-S."/>
            <person name="Yang H."/>
        </authorList>
    </citation>
    <scope>NUCLEOTIDE SEQUENCE [LARGE SCALE GENOMIC DNA]</scope>
    <source>
        <strain>cv. 93-11</strain>
    </source>
</reference>
<name>PDRP1_ORYSI</name>
<gene>
    <name type="primary">PDRP1</name>
    <name type="ORF">OsI_025378</name>
</gene>
<organism>
    <name type="scientific">Oryza sativa subsp. indica</name>
    <name type="common">Rice</name>
    <dbReference type="NCBI Taxonomy" id="39946"/>
    <lineage>
        <taxon>Eukaryota</taxon>
        <taxon>Viridiplantae</taxon>
        <taxon>Streptophyta</taxon>
        <taxon>Embryophyta</taxon>
        <taxon>Tracheophyta</taxon>
        <taxon>Spermatophyta</taxon>
        <taxon>Magnoliopsida</taxon>
        <taxon>Liliopsida</taxon>
        <taxon>Poales</taxon>
        <taxon>Poaceae</taxon>
        <taxon>BOP clade</taxon>
        <taxon>Oryzoideae</taxon>
        <taxon>Oryzeae</taxon>
        <taxon>Oryzinae</taxon>
        <taxon>Oryza</taxon>
        <taxon>Oryza sativa</taxon>
    </lineage>
</organism>
<feature type="transit peptide" description="Chloroplast" evidence="2">
    <location>
        <begin position="1"/>
        <end position="49"/>
    </location>
</feature>
<feature type="chain" id="PRO_0000342601" description="Probable pyruvate, phosphate dikinase regulatory protein, chloroplastic">
    <location>
        <begin position="50"/>
        <end position="471"/>
    </location>
</feature>
<feature type="region of interest" description="Disordered" evidence="3">
    <location>
        <begin position="1"/>
        <end position="133"/>
    </location>
</feature>
<feature type="compositionally biased region" description="Pro residues" evidence="3">
    <location>
        <begin position="21"/>
        <end position="32"/>
    </location>
</feature>
<feature type="compositionally biased region" description="Polar residues" evidence="3">
    <location>
        <begin position="71"/>
        <end position="88"/>
    </location>
</feature>
<feature type="compositionally biased region" description="Basic residues" evidence="3">
    <location>
        <begin position="89"/>
        <end position="99"/>
    </location>
</feature>
<feature type="compositionally biased region" description="Basic and acidic residues" evidence="3">
    <location>
        <begin position="100"/>
        <end position="111"/>
    </location>
</feature>
<feature type="binding site" evidence="2">
    <location>
        <begin position="171"/>
        <end position="178"/>
    </location>
    <ligand>
        <name>ADP</name>
        <dbReference type="ChEBI" id="CHEBI:456216"/>
    </ligand>
</feature>
<comment type="function">
    <text evidence="1">Bifunctional serine/threonine kinase and phosphorylase involved in the dark/light-mediated regulation of PPDK by catalyzing its phosphorylation/dephosphorylation. Dark/light-induced changes in stromal concentrations of the competing ADP and Pi substrates govern the direction of the reaction. In the dark, phosphorylates the catalytic intermediate of PPDK (PPDK-HisP), inactivating it. Light exposure induces the phosphorolysis reaction that reactivates PPDK (By similarity).</text>
</comment>
<comment type="catalytic activity">
    <reaction>
        <text>N(tele)-phospho-L-histidyl/L-threonyl-[pyruvate, phosphate dikinase] + ADP = N(tele)-phospho-L-histidyl/O-phospho-L-threonyl-[pyruvate, phosphate dikinase] + AMP + H(+)</text>
        <dbReference type="Rhea" id="RHEA:43692"/>
        <dbReference type="Rhea" id="RHEA-COMP:10650"/>
        <dbReference type="Rhea" id="RHEA-COMP:10651"/>
        <dbReference type="ChEBI" id="CHEBI:15378"/>
        <dbReference type="ChEBI" id="CHEBI:30013"/>
        <dbReference type="ChEBI" id="CHEBI:61977"/>
        <dbReference type="ChEBI" id="CHEBI:83586"/>
        <dbReference type="ChEBI" id="CHEBI:456215"/>
        <dbReference type="ChEBI" id="CHEBI:456216"/>
        <dbReference type="EC" id="2.7.11.32"/>
    </reaction>
</comment>
<comment type="catalytic activity">
    <reaction>
        <text>N(tele)-phospho-L-histidyl/O-phospho-L-threonyl-[pyruvate, phosphate dikinase] + phosphate + H(+) = N(tele)-phospho-L-histidyl/L-threonyl-[pyruvate, phosphate dikinase] + diphosphate</text>
        <dbReference type="Rhea" id="RHEA:43696"/>
        <dbReference type="Rhea" id="RHEA-COMP:10650"/>
        <dbReference type="Rhea" id="RHEA-COMP:10651"/>
        <dbReference type="ChEBI" id="CHEBI:15378"/>
        <dbReference type="ChEBI" id="CHEBI:30013"/>
        <dbReference type="ChEBI" id="CHEBI:33019"/>
        <dbReference type="ChEBI" id="CHEBI:43474"/>
        <dbReference type="ChEBI" id="CHEBI:61977"/>
        <dbReference type="ChEBI" id="CHEBI:83586"/>
        <dbReference type="EC" id="2.7.4.27"/>
    </reaction>
</comment>
<comment type="activity regulation">
    <text evidence="1">Regulated by light/dark exposure.</text>
</comment>
<comment type="subcellular location">
    <subcellularLocation>
        <location evidence="4">Plastid</location>
        <location evidence="4">Chloroplast</location>
    </subcellularLocation>
</comment>
<comment type="similarity">
    <text evidence="4">Belongs to the pyruvate, phosphate/water dikinase regulatory protein family. PDRP subfamily.</text>
</comment>
<proteinExistence type="inferred from homology"/>
<dbReference type="EC" id="2.7.11.32"/>
<dbReference type="EC" id="2.7.4.27"/>
<dbReference type="EMBL" id="CM000132">
    <property type="protein sequence ID" value="EAZ04146.1"/>
    <property type="molecule type" value="Genomic_DNA"/>
</dbReference>
<dbReference type="SMR" id="A2YM35"/>
<dbReference type="STRING" id="39946.A2YM35"/>
<dbReference type="EnsemblPlants" id="BGIOSGA025853-TA">
    <property type="protein sequence ID" value="BGIOSGA025853-PA"/>
    <property type="gene ID" value="BGIOSGA025853"/>
</dbReference>
<dbReference type="EnsemblPlants" id="OsIR64_07g0017960.01">
    <property type="protein sequence ID" value="OsIR64_07g0017960.01"/>
    <property type="gene ID" value="OsIR64_07g0017960"/>
</dbReference>
<dbReference type="EnsemblPlants" id="OsKYG_07g0017380.01">
    <property type="protein sequence ID" value="OsKYG_07g0017380.01"/>
    <property type="gene ID" value="OsKYG_07g0017380"/>
</dbReference>
<dbReference type="EnsemblPlants" id="OsPr106_07g0017460.01">
    <property type="protein sequence ID" value="OsPr106_07g0017460.01"/>
    <property type="gene ID" value="OsPr106_07g0017460"/>
</dbReference>
<dbReference type="EnsemblPlants" id="OsZS97_07G017290_01">
    <property type="protein sequence ID" value="OsZS97_07G017290_01"/>
    <property type="gene ID" value="OsZS97_07G017290"/>
</dbReference>
<dbReference type="Gramene" id="BGIOSGA025853-TA">
    <property type="protein sequence ID" value="BGIOSGA025853-PA"/>
    <property type="gene ID" value="BGIOSGA025853"/>
</dbReference>
<dbReference type="Gramene" id="OsIR64_07g0017960.01">
    <property type="protein sequence ID" value="OsIR64_07g0017960.01"/>
    <property type="gene ID" value="OsIR64_07g0017960"/>
</dbReference>
<dbReference type="Gramene" id="OsKYG_07g0017380.01">
    <property type="protein sequence ID" value="OsKYG_07g0017380.01"/>
    <property type="gene ID" value="OsKYG_07g0017380"/>
</dbReference>
<dbReference type="Gramene" id="OsPr106_07g0017460.01">
    <property type="protein sequence ID" value="OsPr106_07g0017460.01"/>
    <property type="gene ID" value="OsPr106_07g0017460"/>
</dbReference>
<dbReference type="Gramene" id="OsZS97_07G017290_01">
    <property type="protein sequence ID" value="OsZS97_07G017290_01"/>
    <property type="gene ID" value="OsZS97_07G017290"/>
</dbReference>
<dbReference type="HOGENOM" id="CLU_046206_0_0_1"/>
<dbReference type="OMA" id="YAQCEFE"/>
<dbReference type="Proteomes" id="UP000007015">
    <property type="component" value="Chromosome 7"/>
</dbReference>
<dbReference type="GO" id="GO:0009507">
    <property type="term" value="C:chloroplast"/>
    <property type="evidence" value="ECO:0007669"/>
    <property type="project" value="UniProtKB-SubCell"/>
</dbReference>
<dbReference type="GO" id="GO:0005524">
    <property type="term" value="F:ATP binding"/>
    <property type="evidence" value="ECO:0007669"/>
    <property type="project" value="InterPro"/>
</dbReference>
<dbReference type="GO" id="GO:0016776">
    <property type="term" value="F:phosphotransferase activity, phosphate group as acceptor"/>
    <property type="evidence" value="ECO:0007669"/>
    <property type="project" value="InterPro"/>
</dbReference>
<dbReference type="GO" id="GO:0004674">
    <property type="term" value="F:protein serine/threonine kinase activity"/>
    <property type="evidence" value="ECO:0007669"/>
    <property type="project" value="UniProtKB-KW"/>
</dbReference>
<dbReference type="HAMAP" id="MF_00921">
    <property type="entry name" value="PDRP"/>
    <property type="match status" value="1"/>
</dbReference>
<dbReference type="InterPro" id="IPR005177">
    <property type="entry name" value="Kinase-pyrophosphorylase"/>
</dbReference>
<dbReference type="InterPro" id="IPR026565">
    <property type="entry name" value="PPDK_reg"/>
</dbReference>
<dbReference type="InterPro" id="IPR017409">
    <property type="entry name" value="Pyrv_Pi_dikinase_reg_chlpt"/>
</dbReference>
<dbReference type="NCBIfam" id="NF003742">
    <property type="entry name" value="PRK05339.1"/>
    <property type="match status" value="1"/>
</dbReference>
<dbReference type="PANTHER" id="PTHR31756">
    <property type="entry name" value="PYRUVATE, PHOSPHATE DIKINASE REGULATORY PROTEIN 1, CHLOROPLASTIC"/>
    <property type="match status" value="1"/>
</dbReference>
<dbReference type="PANTHER" id="PTHR31756:SF3">
    <property type="entry name" value="PYRUVATE, PHOSPHATE DIKINASE REGULATORY PROTEIN 1, CHLOROPLASTIC"/>
    <property type="match status" value="1"/>
</dbReference>
<dbReference type="Pfam" id="PF03618">
    <property type="entry name" value="Kinase-PPPase"/>
    <property type="match status" value="1"/>
</dbReference>
<dbReference type="PIRSF" id="PIRSF038149">
    <property type="entry name" value="Pyruvate_Pi_dikinase_regulator"/>
    <property type="match status" value="1"/>
</dbReference>
<evidence type="ECO:0000250" key="1"/>
<evidence type="ECO:0000255" key="2"/>
<evidence type="ECO:0000256" key="3">
    <source>
        <dbReference type="SAM" id="MobiDB-lite"/>
    </source>
</evidence>
<evidence type="ECO:0000305" key="4"/>
<protein>
    <recommendedName>
        <fullName>Probable pyruvate, phosphate dikinase regulatory protein, chloroplastic</fullName>
        <ecNumber>2.7.11.32</ecNumber>
        <ecNumber>2.7.4.27</ecNumber>
    </recommendedName>
    <alternativeName>
        <fullName>Bifunctional dikinase regulatory protein</fullName>
        <shortName>BFRP</shortName>
    </alternativeName>
    <alternativeName>
        <fullName>Pyruvate, Pi dikinase regulatory protein</fullName>
        <shortName>PPDK RP</shortName>
        <shortName>PPDK regulatory protein</shortName>
    </alternativeName>
</protein>
<keyword id="KW-0150">Chloroplast</keyword>
<keyword id="KW-0418">Kinase</keyword>
<keyword id="KW-0547">Nucleotide-binding</keyword>
<keyword id="KW-0934">Plastid</keyword>
<keyword id="KW-1185">Reference proteome</keyword>
<keyword id="KW-0723">Serine/threonine-protein kinase</keyword>
<keyword id="KW-0808">Transferase</keyword>
<keyword id="KW-0809">Transit peptide</keyword>